<sequence length="20" mass="2248">MELGLEPADDFKEKLIKLSA</sequence>
<reference key="1">
    <citation type="journal article" date="1991" name="J. Gen. Microbiol.">
        <title>Analysis of the Serratia marcescens proBA operon and feedback control of proline biosynthesis.</title>
        <authorList>
            <person name="Omori K."/>
            <person name="Suzuki S."/>
            <person name="Imai Y."/>
            <person name="Komatsubara S."/>
        </authorList>
    </citation>
    <scope>NUCLEOTIDE SEQUENCE [GENOMIC DNA]</scope>
    <source>
        <strain>Sr41</strain>
    </source>
</reference>
<feature type="chain" id="PRO_0000066410" description="Uncharacterized protein in proB 5'region">
    <location>
        <begin position="1" status="less than"/>
        <end position="20"/>
    </location>
</feature>
<feature type="non-terminal residue">
    <location>
        <position position="1"/>
    </location>
</feature>
<dbReference type="EMBL" id="D90351">
    <property type="protein sequence ID" value="BAA14363.1"/>
    <property type="molecule type" value="Genomic_DNA"/>
</dbReference>
<dbReference type="EMBL" id="X53086">
    <property type="protein sequence ID" value="CAA37253.1"/>
    <property type="molecule type" value="Genomic_DNA"/>
</dbReference>
<dbReference type="PIR" id="C49753">
    <property type="entry name" value="C49753"/>
</dbReference>
<dbReference type="STRING" id="273526.SMDB11_0223"/>
<accession>P22581</accession>
<organism>
    <name type="scientific">Serratia marcescens</name>
    <dbReference type="NCBI Taxonomy" id="615"/>
    <lineage>
        <taxon>Bacteria</taxon>
        <taxon>Pseudomonadati</taxon>
        <taxon>Pseudomonadota</taxon>
        <taxon>Gammaproteobacteria</taxon>
        <taxon>Enterobacterales</taxon>
        <taxon>Yersiniaceae</taxon>
        <taxon>Serratia</taxon>
    </lineage>
</organism>
<proteinExistence type="predicted"/>
<protein>
    <recommendedName>
        <fullName>Uncharacterized protein in proB 5'region</fullName>
    </recommendedName>
</protein>
<name>YPRB_SERMA</name>